<protein>
    <recommendedName>
        <fullName evidence="1">p-hydroxybenzoic acid efflux pump subunit AaeA</fullName>
        <shortName evidence="1">pHBA efflux pump protein A</shortName>
    </recommendedName>
</protein>
<comment type="function">
    <text evidence="1">Forms an efflux pump with AaeB.</text>
</comment>
<comment type="subcellular location">
    <subcellularLocation>
        <location evidence="1">Cell inner membrane</location>
        <topology evidence="1">Single-pass membrane protein</topology>
    </subcellularLocation>
</comment>
<comment type="similarity">
    <text evidence="1">Belongs to the membrane fusion protein (MFP) (TC 8.A.1) family.</text>
</comment>
<feature type="chain" id="PRO_1000146731" description="p-hydroxybenzoic acid efflux pump subunit AaeA">
    <location>
        <begin position="1"/>
        <end position="311"/>
    </location>
</feature>
<feature type="transmembrane region" description="Helical" evidence="1">
    <location>
        <begin position="11"/>
        <end position="31"/>
    </location>
</feature>
<gene>
    <name evidence="1" type="primary">aaeA</name>
    <name type="ordered locus">YpAngola_A1176</name>
</gene>
<evidence type="ECO:0000255" key="1">
    <source>
        <dbReference type="HAMAP-Rule" id="MF_01544"/>
    </source>
</evidence>
<dbReference type="EMBL" id="CP000901">
    <property type="protein sequence ID" value="ABX88561.1"/>
    <property type="molecule type" value="Genomic_DNA"/>
</dbReference>
<dbReference type="RefSeq" id="WP_002210094.1">
    <property type="nucleotide sequence ID" value="NZ_CP009935.1"/>
</dbReference>
<dbReference type="SMR" id="A9R1V9"/>
<dbReference type="GeneID" id="57975110"/>
<dbReference type="KEGG" id="ypg:YpAngola_A1176"/>
<dbReference type="PATRIC" id="fig|349746.12.peg.2128"/>
<dbReference type="GO" id="GO:0005886">
    <property type="term" value="C:plasma membrane"/>
    <property type="evidence" value="ECO:0007669"/>
    <property type="project" value="UniProtKB-SubCell"/>
</dbReference>
<dbReference type="GO" id="GO:0022857">
    <property type="term" value="F:transmembrane transporter activity"/>
    <property type="evidence" value="ECO:0007669"/>
    <property type="project" value="UniProtKB-UniRule"/>
</dbReference>
<dbReference type="Gene3D" id="2.40.30.170">
    <property type="match status" value="1"/>
</dbReference>
<dbReference type="Gene3D" id="2.40.50.100">
    <property type="match status" value="1"/>
</dbReference>
<dbReference type="HAMAP" id="MF_01544">
    <property type="entry name" value="AaeA"/>
    <property type="match status" value="1"/>
</dbReference>
<dbReference type="InterPro" id="IPR043602">
    <property type="entry name" value="CusB-like_dom_1"/>
</dbReference>
<dbReference type="InterPro" id="IPR032317">
    <property type="entry name" value="CusB_D23"/>
</dbReference>
<dbReference type="InterPro" id="IPR050393">
    <property type="entry name" value="MFP_Efflux_Pump"/>
</dbReference>
<dbReference type="InterPro" id="IPR022871">
    <property type="entry name" value="PHBA_efflux_pump_AaeA"/>
</dbReference>
<dbReference type="InterPro" id="IPR006143">
    <property type="entry name" value="RND_pump_MFP"/>
</dbReference>
<dbReference type="NCBIfam" id="NF007850">
    <property type="entry name" value="PRK10559.1"/>
    <property type="match status" value="1"/>
</dbReference>
<dbReference type="NCBIfam" id="TIGR01730">
    <property type="entry name" value="RND_mfp"/>
    <property type="match status" value="1"/>
</dbReference>
<dbReference type="PANTHER" id="PTHR30367:SF12">
    <property type="entry name" value="P-HYDROXYBENZOIC ACID EFFLUX PUMP SUBUNIT AAEA"/>
    <property type="match status" value="1"/>
</dbReference>
<dbReference type="PANTHER" id="PTHR30367">
    <property type="entry name" value="P-HYDROXYBENZOIC ACID EFFLUX PUMP SUBUNIT AAEA-RELATED"/>
    <property type="match status" value="1"/>
</dbReference>
<dbReference type="Pfam" id="PF00529">
    <property type="entry name" value="CusB_dom_1"/>
    <property type="match status" value="1"/>
</dbReference>
<dbReference type="Pfam" id="PF16576">
    <property type="entry name" value="HlyD_D23"/>
    <property type="match status" value="1"/>
</dbReference>
<dbReference type="SUPFAM" id="SSF111369">
    <property type="entry name" value="HlyD-like secretion proteins"/>
    <property type="match status" value="1"/>
</dbReference>
<sequence>MSTFSLKIIRVGITVLVVVLAVIAIFNVWAFYTESPWTRDAKFTADVVAIAPDVSGLLTEVPVKDNQLVQKGQILFVIDQPRYQQALAEAEADVAYYQTLAAEKQRESSRRHRLGIQALSQEEIDQASNVLQTVQHQLAKAIAVRDLARLDLERTTVRAPAEGWVTNLNVHAGEFINRGATAVALVKKDTFYILAYLEETKLEGVKPGYRAEITPLGSNRILHGTVDSISAGVTNSSSSADSKGLATIDNNLEWVRLAQRVPVKIHLDSEDQQYLYPAGTTATVVITGPNDRDPHQASPMTKLMHRLREFG</sequence>
<reference key="1">
    <citation type="journal article" date="2010" name="J. Bacteriol.">
        <title>Genome sequence of the deep-rooted Yersinia pestis strain Angola reveals new insights into the evolution and pangenome of the plague bacterium.</title>
        <authorList>
            <person name="Eppinger M."/>
            <person name="Worsham P.L."/>
            <person name="Nikolich M.P."/>
            <person name="Riley D.R."/>
            <person name="Sebastian Y."/>
            <person name="Mou S."/>
            <person name="Achtman M."/>
            <person name="Lindler L.E."/>
            <person name="Ravel J."/>
        </authorList>
    </citation>
    <scope>NUCLEOTIDE SEQUENCE [LARGE SCALE GENOMIC DNA]</scope>
    <source>
        <strain>Angola</strain>
    </source>
</reference>
<name>AAEA_YERPG</name>
<proteinExistence type="inferred from homology"/>
<keyword id="KW-0997">Cell inner membrane</keyword>
<keyword id="KW-1003">Cell membrane</keyword>
<keyword id="KW-0472">Membrane</keyword>
<keyword id="KW-0812">Transmembrane</keyword>
<keyword id="KW-1133">Transmembrane helix</keyword>
<keyword id="KW-0813">Transport</keyword>
<organism>
    <name type="scientific">Yersinia pestis bv. Antiqua (strain Angola)</name>
    <dbReference type="NCBI Taxonomy" id="349746"/>
    <lineage>
        <taxon>Bacteria</taxon>
        <taxon>Pseudomonadati</taxon>
        <taxon>Pseudomonadota</taxon>
        <taxon>Gammaproteobacteria</taxon>
        <taxon>Enterobacterales</taxon>
        <taxon>Yersiniaceae</taxon>
        <taxon>Yersinia</taxon>
    </lineage>
</organism>
<accession>A9R1V9</accession>